<organism>
    <name type="scientific">Escherichia coli (strain K12)</name>
    <dbReference type="NCBI Taxonomy" id="83333"/>
    <lineage>
        <taxon>Bacteria</taxon>
        <taxon>Pseudomonadati</taxon>
        <taxon>Pseudomonadota</taxon>
        <taxon>Gammaproteobacteria</taxon>
        <taxon>Enterobacterales</taxon>
        <taxon>Enterobacteriaceae</taxon>
        <taxon>Escherichia</taxon>
    </lineage>
</organism>
<sequence>MAQAGFILTRHWRDTPQGTEVSFWLATDNGPLQVTLAPQESVAFIPADQVPRAQHILQGEQGFRLTPLALKDFHRQPVYGLYCRAHRQLMNYEKRLREGGVTVYEADVRPPERYLMERFITSPVWVEGDMHNGTIVNARLKPHPDYRPPLKWVSIDIETTRHGELYCIGLEGCGQRIVYMLGPENGDASSLDFELEYVASRPQLLEKLNAWFANYDPDVIIGWNVVQFDLRMLQKHAERYRLPLRLGRDNSELEWREHGFKNGVFFAQAKGRLIIDGIEALKSAFWNFSSFSLETVAQELLGEGKSIDNPWDRMDEIDRRFAEDKPALATYNLKDCELVTQIFHKTEIMPFLLERATVNGLPVDRHGGSVAAFGHLYFPRMHRAGYVAPNLGEVPPHASPGGYVMDSRPGLYDSVLVLDYKSLYPSIIRTFLIDPVGLVEGMAQPDPEHSTEGFLDAWFSREKHCLPEIVTNIWHGRDEAKRQGNKPLSQALKIIMNAFYGVLGTTACRFFDPRLASSITMRGHQIMRQTKALIEAQGYDVIYGDTDSTFVWLKGAHSEEEAAKIGRALVQHVNAWWAETLQKQRLTSALELEYETHFCRFLMPTIRGADTGSKKRYAGLIQEGDKQRMVFKGLETVRTDWTPLAQQFQQELYLRIFRNEPYQEYVRETIDKLMAGELDARLVYRKRLRRPLSEYQRNVPPHVRAARLADEENQKRGRPLQYQNRGTIKYVWTTNGPEPLDYQRSPLDYEHYLTRQLQPVAEGILPFIEDNFATLMTGQLGLF</sequence>
<evidence type="ECO:0000269" key="1">
    <source>
    </source>
</evidence>
<evidence type="ECO:0000269" key="2">
    <source>
    </source>
</evidence>
<evidence type="ECO:0000269" key="3">
    <source>
    </source>
</evidence>
<evidence type="ECO:0000269" key="4">
    <source>
    </source>
</evidence>
<evidence type="ECO:0000269" key="5">
    <source>
    </source>
</evidence>
<evidence type="ECO:0000305" key="6"/>
<evidence type="ECO:0007829" key="7">
    <source>
        <dbReference type="PDB" id="1Q8I"/>
    </source>
</evidence>
<evidence type="ECO:0007829" key="8">
    <source>
        <dbReference type="PDB" id="3K59"/>
    </source>
</evidence>
<evidence type="ECO:0007829" key="9">
    <source>
        <dbReference type="PDB" id="3K5L"/>
    </source>
</evidence>
<evidence type="ECO:0007829" key="10">
    <source>
        <dbReference type="PDB" id="3K5O"/>
    </source>
</evidence>
<accession>P21189</accession>
<accession>Q8KMX7</accession>
<accession>Q8KMX8</accession>
<gene>
    <name type="primary">polB</name>
    <name type="synonym">dinA</name>
    <name type="ordered locus">b0060</name>
    <name type="ordered locus">JW0059</name>
</gene>
<keyword id="KW-0002">3D-structure</keyword>
<keyword id="KW-0903">Direct protein sequencing</keyword>
<keyword id="KW-0227">DNA damage</keyword>
<keyword id="KW-0234">DNA repair</keyword>
<keyword id="KW-0238">DNA-binding</keyword>
<keyword id="KW-0239">DNA-directed DNA polymerase</keyword>
<keyword id="KW-0548">Nucleotidyltransferase</keyword>
<keyword id="KW-1185">Reference proteome</keyword>
<keyword id="KW-0742">SOS response</keyword>
<keyword id="KW-0808">Transferase</keyword>
<name>DPO2_ECOLI</name>
<comment type="function">
    <text evidence="1 2">Thought to be involved in DNA repair and/or mutagenesis. Its processivity is enhanced by the beta sliding clamp (dnaN) and clamp loader (PubMed:1534562, PubMed:1999435).</text>
</comment>
<comment type="catalytic activity">
    <reaction>
        <text>DNA(n) + a 2'-deoxyribonucleoside 5'-triphosphate = DNA(n+1) + diphosphate</text>
        <dbReference type="Rhea" id="RHEA:22508"/>
        <dbReference type="Rhea" id="RHEA-COMP:17339"/>
        <dbReference type="Rhea" id="RHEA-COMP:17340"/>
        <dbReference type="ChEBI" id="CHEBI:33019"/>
        <dbReference type="ChEBI" id="CHEBI:61560"/>
        <dbReference type="ChEBI" id="CHEBI:173112"/>
        <dbReference type="EC" id="2.7.7.7"/>
    </reaction>
</comment>
<comment type="activity regulation">
    <text>DNA polymerase II activity is regulated by the lexA gene during the SOS response.</text>
</comment>
<comment type="similarity">
    <text evidence="6">Belongs to the DNA polymerase type-B family.</text>
</comment>
<dbReference type="EC" id="2.7.7.7"/>
<dbReference type="EMBL" id="X54847">
    <property type="protein sequence ID" value="CAA38616.1"/>
    <property type="molecule type" value="Genomic_DNA"/>
</dbReference>
<dbReference type="EMBL" id="M62646">
    <property type="protein sequence ID" value="AAA24406.1"/>
    <property type="molecule type" value="Genomic_DNA"/>
</dbReference>
<dbReference type="EMBL" id="M35371">
    <property type="protein sequence ID" value="AAA24407.1"/>
    <property type="molecule type" value="Genomic_DNA"/>
</dbReference>
<dbReference type="EMBL" id="M38283">
    <property type="protein sequence ID" value="AAA63764.1"/>
    <property type="molecule type" value="Genomic_DNA"/>
</dbReference>
<dbReference type="EMBL" id="U00096">
    <property type="protein sequence ID" value="AAC73171.1"/>
    <property type="molecule type" value="Genomic_DNA"/>
</dbReference>
<dbReference type="EMBL" id="AP009048">
    <property type="protein sequence ID" value="BAB96628.2"/>
    <property type="molecule type" value="Genomic_DNA"/>
</dbReference>
<dbReference type="EMBL" id="M37727">
    <property type="protein sequence ID" value="AAA23684.1"/>
    <property type="molecule type" value="Genomic_DNA"/>
</dbReference>
<dbReference type="PIR" id="S15943">
    <property type="entry name" value="JDEC22"/>
</dbReference>
<dbReference type="RefSeq" id="NP_414602.1">
    <property type="nucleotide sequence ID" value="NC_000913.3"/>
</dbReference>
<dbReference type="RefSeq" id="WP_000035670.1">
    <property type="nucleotide sequence ID" value="NZ_LN832404.1"/>
</dbReference>
<dbReference type="PDB" id="1Q8I">
    <property type="method" value="X-ray"/>
    <property type="resolution" value="2.00 A"/>
    <property type="chains" value="A=1-783"/>
</dbReference>
<dbReference type="PDB" id="3K57">
    <property type="method" value="X-ray"/>
    <property type="resolution" value="2.08 A"/>
    <property type="chains" value="A=1-783"/>
</dbReference>
<dbReference type="PDB" id="3K58">
    <property type="method" value="X-ray"/>
    <property type="resolution" value="2.05 A"/>
    <property type="chains" value="A=1-783"/>
</dbReference>
<dbReference type="PDB" id="3K59">
    <property type="method" value="X-ray"/>
    <property type="resolution" value="1.92 A"/>
    <property type="chains" value="A=1-783"/>
</dbReference>
<dbReference type="PDB" id="3K5L">
    <property type="method" value="X-ray"/>
    <property type="resolution" value="2.70 A"/>
    <property type="chains" value="A=1-783"/>
</dbReference>
<dbReference type="PDB" id="3K5M">
    <property type="method" value="X-ray"/>
    <property type="resolution" value="2.04 A"/>
    <property type="chains" value="A=1-783"/>
</dbReference>
<dbReference type="PDB" id="3K5N">
    <property type="method" value="X-ray"/>
    <property type="resolution" value="3.15 A"/>
    <property type="chains" value="A/B=1-783"/>
</dbReference>
<dbReference type="PDB" id="3K5O">
    <property type="method" value="X-ray"/>
    <property type="resolution" value="2.20 A"/>
    <property type="chains" value="A/B=1-783"/>
</dbReference>
<dbReference type="PDB" id="3MAQ">
    <property type="method" value="X-ray"/>
    <property type="resolution" value="2.40 A"/>
    <property type="chains" value="A=1-783"/>
</dbReference>
<dbReference type="PDBsum" id="1Q8I"/>
<dbReference type="PDBsum" id="3K57"/>
<dbReference type="PDBsum" id="3K58"/>
<dbReference type="PDBsum" id="3K59"/>
<dbReference type="PDBsum" id="3K5L"/>
<dbReference type="PDBsum" id="3K5M"/>
<dbReference type="PDBsum" id="3K5N"/>
<dbReference type="PDBsum" id="3K5O"/>
<dbReference type="PDBsum" id="3MAQ"/>
<dbReference type="SMR" id="P21189"/>
<dbReference type="BioGRID" id="4261621">
    <property type="interactions" value="111"/>
</dbReference>
<dbReference type="BioGRID" id="849181">
    <property type="interactions" value="1"/>
</dbReference>
<dbReference type="FunCoup" id="P21189">
    <property type="interactions" value="482"/>
</dbReference>
<dbReference type="IntAct" id="P21189">
    <property type="interactions" value="5"/>
</dbReference>
<dbReference type="STRING" id="511145.b0060"/>
<dbReference type="PaxDb" id="511145-b0060"/>
<dbReference type="EnsemblBacteria" id="AAC73171">
    <property type="protein sequence ID" value="AAC73171"/>
    <property type="gene ID" value="b0060"/>
</dbReference>
<dbReference type="GeneID" id="944779"/>
<dbReference type="KEGG" id="ecj:JW0059"/>
<dbReference type="KEGG" id="eco:b0060"/>
<dbReference type="PATRIC" id="fig|1411691.4.peg.2223"/>
<dbReference type="EchoBASE" id="EB0740"/>
<dbReference type="eggNOG" id="COG0417">
    <property type="taxonomic scope" value="Bacteria"/>
</dbReference>
<dbReference type="HOGENOM" id="CLU_018487_0_0_6"/>
<dbReference type="InParanoid" id="P21189"/>
<dbReference type="OMA" id="FVLTRHW"/>
<dbReference type="OrthoDB" id="5807460at2"/>
<dbReference type="PhylomeDB" id="P21189"/>
<dbReference type="BioCyc" id="EcoCyc:EG10747-MONOMER"/>
<dbReference type="BioCyc" id="MetaCyc:EG10747-MONOMER"/>
<dbReference type="EvolutionaryTrace" id="P21189"/>
<dbReference type="PRO" id="PR:P21189"/>
<dbReference type="Proteomes" id="UP000000625">
    <property type="component" value="Chromosome"/>
</dbReference>
<dbReference type="GO" id="GO:0008296">
    <property type="term" value="F:3'-5'-DNA exonuclease activity"/>
    <property type="evidence" value="ECO:0000314"/>
    <property type="project" value="EcoCyc"/>
</dbReference>
<dbReference type="GO" id="GO:0003677">
    <property type="term" value="F:DNA binding"/>
    <property type="evidence" value="ECO:0007669"/>
    <property type="project" value="UniProtKB-KW"/>
</dbReference>
<dbReference type="GO" id="GO:0003887">
    <property type="term" value="F:DNA-directed DNA polymerase activity"/>
    <property type="evidence" value="ECO:0000314"/>
    <property type="project" value="EcoCyc"/>
</dbReference>
<dbReference type="GO" id="GO:0000166">
    <property type="term" value="F:nucleotide binding"/>
    <property type="evidence" value="ECO:0007669"/>
    <property type="project" value="InterPro"/>
</dbReference>
<dbReference type="GO" id="GO:0045004">
    <property type="term" value="P:DNA replication proofreading"/>
    <property type="evidence" value="ECO:0000314"/>
    <property type="project" value="EcoCyc"/>
</dbReference>
<dbReference type="GO" id="GO:0006261">
    <property type="term" value="P:DNA-templated DNA replication"/>
    <property type="evidence" value="ECO:0000315"/>
    <property type="project" value="EcoCyc"/>
</dbReference>
<dbReference type="GO" id="GO:0009432">
    <property type="term" value="P:SOS response"/>
    <property type="evidence" value="ECO:0000270"/>
    <property type="project" value="EcoCyc"/>
</dbReference>
<dbReference type="CDD" id="cd05784">
    <property type="entry name" value="DNA_polB_II_exo"/>
    <property type="match status" value="1"/>
</dbReference>
<dbReference type="CDD" id="cd05537">
    <property type="entry name" value="POLBc_Pol_II"/>
    <property type="match status" value="1"/>
</dbReference>
<dbReference type="FunFam" id="1.10.132.60:FF:000008">
    <property type="entry name" value="DNA polymerase"/>
    <property type="match status" value="1"/>
</dbReference>
<dbReference type="FunFam" id="2.40.50.590:FF:000001">
    <property type="entry name" value="DNA polymerase"/>
    <property type="match status" value="1"/>
</dbReference>
<dbReference type="FunFam" id="3.30.420.10:FF:000052">
    <property type="entry name" value="DNA polymerase"/>
    <property type="match status" value="1"/>
</dbReference>
<dbReference type="FunFam" id="3.30.70.2250:FF:000001">
    <property type="entry name" value="DNA polymerase"/>
    <property type="match status" value="1"/>
</dbReference>
<dbReference type="FunFam" id="3.90.1600.10:FF:000009">
    <property type="entry name" value="DNA polymerase"/>
    <property type="match status" value="1"/>
</dbReference>
<dbReference type="FunFam" id="3.90.1600.10:FF:000010">
    <property type="entry name" value="DNA polymerase"/>
    <property type="match status" value="1"/>
</dbReference>
<dbReference type="Gene3D" id="2.40.50.590">
    <property type="match status" value="1"/>
</dbReference>
<dbReference type="Gene3D" id="3.30.70.2250">
    <property type="match status" value="1"/>
</dbReference>
<dbReference type="Gene3D" id="1.10.132.60">
    <property type="entry name" value="DNA polymerase family B, C-terminal domain"/>
    <property type="match status" value="1"/>
</dbReference>
<dbReference type="Gene3D" id="3.90.1600.10">
    <property type="entry name" value="Palm domain of DNA polymerase"/>
    <property type="match status" value="2"/>
</dbReference>
<dbReference type="Gene3D" id="3.30.420.10">
    <property type="entry name" value="Ribonuclease H-like superfamily/Ribonuclease H"/>
    <property type="match status" value="1"/>
</dbReference>
<dbReference type="InterPro" id="IPR006172">
    <property type="entry name" value="DNA-dir_DNA_pol_B"/>
</dbReference>
<dbReference type="InterPro" id="IPR017964">
    <property type="entry name" value="DNA-dir_DNA_pol_B_CS"/>
</dbReference>
<dbReference type="InterPro" id="IPR006133">
    <property type="entry name" value="DNA-dir_DNA_pol_B_exonuc"/>
</dbReference>
<dbReference type="InterPro" id="IPR006134">
    <property type="entry name" value="DNA-dir_DNA_pol_B_multi_dom"/>
</dbReference>
<dbReference type="InterPro" id="IPR043502">
    <property type="entry name" value="DNA/RNA_pol_sf"/>
</dbReference>
<dbReference type="InterPro" id="IPR042087">
    <property type="entry name" value="DNA_pol_B_thumb"/>
</dbReference>
<dbReference type="InterPro" id="IPR023211">
    <property type="entry name" value="DNA_pol_palm_dom_sf"/>
</dbReference>
<dbReference type="InterPro" id="IPR050240">
    <property type="entry name" value="DNA_pol_type-B"/>
</dbReference>
<dbReference type="InterPro" id="IPR055208">
    <property type="entry name" value="PolB_insertion"/>
</dbReference>
<dbReference type="InterPro" id="IPR012337">
    <property type="entry name" value="RNaseH-like_sf"/>
</dbReference>
<dbReference type="InterPro" id="IPR036397">
    <property type="entry name" value="RNaseH_sf"/>
</dbReference>
<dbReference type="NCBIfam" id="NF004420">
    <property type="entry name" value="PRK05762.1-1"/>
    <property type="match status" value="1"/>
</dbReference>
<dbReference type="NCBIfam" id="NF004421">
    <property type="entry name" value="PRK05762.1-2"/>
    <property type="match status" value="1"/>
</dbReference>
<dbReference type="NCBIfam" id="NF004422">
    <property type="entry name" value="PRK05762.1-4"/>
    <property type="match status" value="1"/>
</dbReference>
<dbReference type="PANTHER" id="PTHR10322">
    <property type="entry name" value="DNA POLYMERASE CATALYTIC SUBUNIT"/>
    <property type="match status" value="1"/>
</dbReference>
<dbReference type="PANTHER" id="PTHR10322:SF23">
    <property type="entry name" value="DNA POLYMERASE DELTA CATALYTIC SUBUNIT"/>
    <property type="match status" value="1"/>
</dbReference>
<dbReference type="Pfam" id="PF00136">
    <property type="entry name" value="DNA_pol_B"/>
    <property type="match status" value="1"/>
</dbReference>
<dbReference type="Pfam" id="PF03104">
    <property type="entry name" value="DNA_pol_B_exo1"/>
    <property type="match status" value="1"/>
</dbReference>
<dbReference type="Pfam" id="PF22587">
    <property type="entry name" value="DNApolII_insertion"/>
    <property type="match status" value="1"/>
</dbReference>
<dbReference type="Pfam" id="PF21474">
    <property type="entry name" value="DNApolII_N"/>
    <property type="match status" value="1"/>
</dbReference>
<dbReference type="PRINTS" id="PR00106">
    <property type="entry name" value="DNAPOLB"/>
</dbReference>
<dbReference type="SMART" id="SM00486">
    <property type="entry name" value="POLBc"/>
    <property type="match status" value="1"/>
</dbReference>
<dbReference type="SUPFAM" id="SSF56672">
    <property type="entry name" value="DNA/RNA polymerases"/>
    <property type="match status" value="1"/>
</dbReference>
<dbReference type="SUPFAM" id="SSF53098">
    <property type="entry name" value="Ribonuclease H-like"/>
    <property type="match status" value="1"/>
</dbReference>
<dbReference type="PROSITE" id="PS00116">
    <property type="entry name" value="DNA_POLYMERASE_B"/>
    <property type="match status" value="1"/>
</dbReference>
<proteinExistence type="evidence at protein level"/>
<reference key="1">
    <citation type="journal article" date="1991" name="Mol. Gen. Genet.">
        <title>Escherichia coli DNA polymerase II is homologous to alpha-like DNA polymerases.</title>
        <authorList>
            <person name="Iwasaki H."/>
            <person name="Ishino Y."/>
            <person name="Toh H."/>
            <person name="Nakata A."/>
            <person name="Shinagawa H."/>
        </authorList>
    </citation>
    <scope>NUCLEOTIDE SEQUENCE [GENOMIC DNA]</scope>
    <scope>PROTEIN SEQUENCE OF 2-9</scope>
    <source>
        <strain>K12 / W3110 / ATCC 27325 / DSM 5911</strain>
    </source>
</reference>
<reference key="2">
    <citation type="journal article" date="1990" name="DNA Cell Biol.">
        <title>Nucleotide sequence and deletion analysis of the polB gene of Escherichia coli.</title>
        <authorList>
            <person name="Chen H."/>
            <person name="Sun Y."/>
            <person name="Stark T."/>
            <person name="Beattie W."/>
            <person name="Moses R.E."/>
        </authorList>
    </citation>
    <scope>NUCLEOTIDE SEQUENCE [GENOMIC DNA]</scope>
    <source>
        <strain>K12</strain>
    </source>
</reference>
<reference key="3">
    <citation type="journal article" date="1992" name="Nucleic Acids Res.">
        <title>Systematic sequencing of the Escherichia coli genome: analysis of the 0-2.4 min region.</title>
        <authorList>
            <person name="Yura T."/>
            <person name="Mori H."/>
            <person name="Nagai H."/>
            <person name="Nagata T."/>
            <person name="Ishihama A."/>
            <person name="Fujita N."/>
            <person name="Isono K."/>
            <person name="Mizobuchi K."/>
            <person name="Nakata A."/>
        </authorList>
    </citation>
    <scope>NUCLEOTIDE SEQUENCE [LARGE SCALE GENOMIC DNA]</scope>
    <source>
        <strain>K12</strain>
    </source>
</reference>
<reference key="4">
    <citation type="journal article" date="1997" name="Science">
        <title>The complete genome sequence of Escherichia coli K-12.</title>
        <authorList>
            <person name="Blattner F.R."/>
            <person name="Plunkett G. III"/>
            <person name="Bloch C.A."/>
            <person name="Perna N.T."/>
            <person name="Burland V."/>
            <person name="Riley M."/>
            <person name="Collado-Vides J."/>
            <person name="Glasner J.D."/>
            <person name="Rode C.K."/>
            <person name="Mayhew G.F."/>
            <person name="Gregor J."/>
            <person name="Davis N.W."/>
            <person name="Kirkpatrick H.A."/>
            <person name="Goeden M.A."/>
            <person name="Rose D.J."/>
            <person name="Mau B."/>
            <person name="Shao Y."/>
        </authorList>
    </citation>
    <scope>NUCLEOTIDE SEQUENCE [LARGE SCALE GENOMIC DNA]</scope>
    <source>
        <strain>K12 / MG1655 / ATCC 47076</strain>
    </source>
</reference>
<reference key="5">
    <citation type="journal article" date="2006" name="Mol. Syst. Biol.">
        <title>Highly accurate genome sequences of Escherichia coli K-12 strains MG1655 and W3110.</title>
        <authorList>
            <person name="Hayashi K."/>
            <person name="Morooka N."/>
            <person name="Yamamoto Y."/>
            <person name="Fujita K."/>
            <person name="Isono K."/>
            <person name="Choi S."/>
            <person name="Ohtsubo E."/>
            <person name="Baba T."/>
            <person name="Wanner B.L."/>
            <person name="Mori H."/>
            <person name="Horiuchi T."/>
        </authorList>
    </citation>
    <scope>NUCLEOTIDE SEQUENCE [LARGE SCALE GENOMIC DNA]</scope>
    <scope>SEQUENCE REVISION</scope>
    <source>
        <strain>K12 / W3110 / ATCC 27325 / DSM 5911</strain>
    </source>
</reference>
<reference key="6">
    <citation type="journal article" date="1990" name="Proc. Natl. Acad. Sci. U.S.A.">
        <title>DNA polymerase II is encoded by the DNA damage-inducible dinA gene of Escherichia coli.</title>
        <authorList>
            <person name="Bonner C.A."/>
            <person name="Hays S."/>
            <person name="McEntee K."/>
            <person name="Goodman M.F."/>
        </authorList>
    </citation>
    <scope>NUCLEOTIDE SEQUENCE [GENOMIC DNA] OF 1-458</scope>
    <scope>PROTEIN SEQUENCE OF 2-28</scope>
    <source>
        <strain>K12</strain>
    </source>
</reference>
<reference key="7">
    <citation type="journal article" date="1991" name="J. Biol. Chem.">
        <title>Escherichia coli DNA polymerase II is stimulated by DNA polymerase III holoenzyme auxiliary subunits.</title>
        <authorList>
            <person name="Hughes A.J. Jr."/>
            <person name="Bryan S.K."/>
            <person name="Chen H."/>
            <person name="Moses R.E."/>
            <person name="McHenry C.S."/>
        </authorList>
    </citation>
    <scope>STIMULATION BY BETA SLIDING-CLAMP (DNAN)</scope>
</reference>
<reference key="8">
    <citation type="journal article" date="1992" name="J. Biol. Chem.">
        <title>Processive DNA synthesis by DNA polymerase II mediated by DNA polymerase III accessory proteins.</title>
        <authorList>
            <person name="Bonner C.A."/>
            <person name="Stukenberg P.T."/>
            <person name="Rajagopalan M."/>
            <person name="Eritja R."/>
            <person name="O'Donnell M."/>
            <person name="McEntee K."/>
            <person name="Echols H."/>
            <person name="Goodman M.F."/>
        </authorList>
    </citation>
    <scope>STIMULATION BY BETA SLIDING-CLAMP (DNAN)</scope>
</reference>
<reference key="9">
    <citation type="journal article" date="1997" name="J. Biol. Chem.">
        <title>The Escherichia coli polB locus is identical to dinA, the structural gene for DNA polymerase II. Characterization of Pol II purified from a polB mutant.</title>
        <authorList>
            <person name="Qiu Z."/>
            <person name="Goodman M.F."/>
        </authorList>
    </citation>
    <scope>VARIANT ASP-401</scope>
</reference>
<feature type="initiator methionine" description="Removed" evidence="3 4">
    <location>
        <position position="1"/>
    </location>
</feature>
<feature type="chain" id="PRO_0000046473" description="DNA polymerase II">
    <location>
        <begin position="2"/>
        <end position="783"/>
    </location>
</feature>
<feature type="sequence variant" description="In allele POLB100." evidence="5">
    <original>G</original>
    <variation>D</variation>
    <location>
        <position position="401"/>
    </location>
</feature>
<feature type="sequence conflict" description="In Ref. 2; AAA24406/AAA24407." evidence="6" ref="2">
    <original>G</original>
    <variation>A</variation>
    <location>
        <position position="172"/>
    </location>
</feature>
<feature type="sequence conflict" description="In Ref. 6; AAA63764/AAA23684." evidence="6" ref="6">
    <original>EH</original>
    <variation>DD</variation>
    <location>
        <begin position="257"/>
        <end position="258"/>
    </location>
</feature>
<feature type="sequence conflict" description="In Ref. 6; AAA63764/AAA23684." evidence="6" ref="6">
    <original>R</original>
    <variation>G</variation>
    <location>
        <position position="272"/>
    </location>
</feature>
<feature type="sequence conflict" description="In Ref. 2; AAA24406/AAA24407." evidence="6" ref="2">
    <original>N</original>
    <variation>T</variation>
    <location>
        <position position="735"/>
    </location>
</feature>
<feature type="sequence conflict" description="In Ref. 2; AAA24406/AAA24407." evidence="6" ref="2">
    <original>LDYQRSPLDYEHYLTRQLQPVAEGILPFIEDNFATLMTGQLGLF</original>
    <variation>PGLPTFTTGLRTLSDPPATTRGGGNTPFY</variation>
    <location>
        <begin position="740"/>
        <end position="783"/>
    </location>
</feature>
<feature type="strand" evidence="8">
    <location>
        <begin position="2"/>
        <end position="15"/>
    </location>
</feature>
<feature type="strand" evidence="8">
    <location>
        <begin position="18"/>
        <end position="27"/>
    </location>
</feature>
<feature type="strand" evidence="8">
    <location>
        <begin position="30"/>
        <end position="35"/>
    </location>
</feature>
<feature type="strand" evidence="8">
    <location>
        <begin position="41"/>
        <end position="46"/>
    </location>
</feature>
<feature type="helix" evidence="8">
    <location>
        <begin position="47"/>
        <end position="49"/>
    </location>
</feature>
<feature type="helix" evidence="8">
    <location>
        <begin position="50"/>
        <end position="56"/>
    </location>
</feature>
<feature type="turn" evidence="8">
    <location>
        <begin position="57"/>
        <end position="59"/>
    </location>
</feature>
<feature type="strand" evidence="8">
    <location>
        <begin position="62"/>
        <end position="71"/>
    </location>
</feature>
<feature type="strand" evidence="8">
    <location>
        <begin position="77"/>
        <end position="85"/>
    </location>
</feature>
<feature type="helix" evidence="8">
    <location>
        <begin position="86"/>
        <end position="98"/>
    </location>
</feature>
<feature type="helix" evidence="8">
    <location>
        <begin position="110"/>
        <end position="117"/>
    </location>
</feature>
<feature type="strand" evidence="8">
    <location>
        <begin position="121"/>
        <end position="131"/>
    </location>
</feature>
<feature type="strand" evidence="8">
    <location>
        <begin position="134"/>
        <end position="142"/>
    </location>
</feature>
<feature type="strand" evidence="8">
    <location>
        <begin position="152"/>
        <end position="159"/>
    </location>
</feature>
<feature type="strand" evidence="8">
    <location>
        <begin position="165"/>
        <end position="172"/>
    </location>
</feature>
<feature type="strand" evidence="8">
    <location>
        <begin position="175"/>
        <end position="183"/>
    </location>
</feature>
<feature type="strand" evidence="8">
    <location>
        <begin position="192"/>
        <end position="200"/>
    </location>
</feature>
<feature type="helix" evidence="8">
    <location>
        <begin position="201"/>
        <end position="215"/>
    </location>
</feature>
<feature type="strand" evidence="8">
    <location>
        <begin position="218"/>
        <end position="224"/>
    </location>
</feature>
<feature type="turn" evidence="8">
    <location>
        <begin position="225"/>
        <end position="228"/>
    </location>
</feature>
<feature type="helix" evidence="8">
    <location>
        <begin position="229"/>
        <end position="240"/>
    </location>
</feature>
<feature type="turn" evidence="8">
    <location>
        <begin position="248"/>
        <end position="250"/>
    </location>
</feature>
<feature type="strand" evidence="8">
    <location>
        <begin position="254"/>
        <end position="257"/>
    </location>
</feature>
<feature type="strand" evidence="8">
    <location>
        <begin position="259"/>
        <end position="261"/>
    </location>
</feature>
<feature type="strand" evidence="8">
    <location>
        <begin position="265"/>
        <end position="268"/>
    </location>
</feature>
<feature type="strand" evidence="8">
    <location>
        <begin position="273"/>
        <end position="276"/>
    </location>
</feature>
<feature type="helix" evidence="8">
    <location>
        <begin position="277"/>
        <end position="283"/>
    </location>
</feature>
<feature type="helix" evidence="8">
    <location>
        <begin position="293"/>
        <end position="301"/>
    </location>
</feature>
<feature type="strand" evidence="9">
    <location>
        <begin position="305"/>
        <end position="307"/>
    </location>
</feature>
<feature type="helix" evidence="8">
    <location>
        <begin position="310"/>
        <end position="323"/>
    </location>
</feature>
<feature type="helix" evidence="8">
    <location>
        <begin position="325"/>
        <end position="346"/>
    </location>
</feature>
<feature type="helix" evidence="8">
    <location>
        <begin position="348"/>
        <end position="359"/>
    </location>
</feature>
<feature type="turn" evidence="7">
    <location>
        <begin position="363"/>
        <end position="366"/>
    </location>
</feature>
<feature type="helix" evidence="8">
    <location>
        <begin position="369"/>
        <end position="383"/>
    </location>
</feature>
<feature type="strand" evidence="8">
    <location>
        <begin position="410"/>
        <end position="413"/>
    </location>
</feature>
<feature type="strand" evidence="8">
    <location>
        <begin position="415"/>
        <end position="420"/>
    </location>
</feature>
<feature type="helix" evidence="8">
    <location>
        <begin position="423"/>
        <end position="431"/>
    </location>
</feature>
<feature type="helix" evidence="8">
    <location>
        <begin position="435"/>
        <end position="443"/>
    </location>
</feature>
<feature type="turn" evidence="8">
    <location>
        <begin position="447"/>
        <end position="449"/>
    </location>
</feature>
<feature type="strand" evidence="8">
    <location>
        <begin position="450"/>
        <end position="452"/>
    </location>
</feature>
<feature type="strand" evidence="10">
    <location>
        <begin position="454"/>
        <end position="456"/>
    </location>
</feature>
<feature type="strand" evidence="8">
    <location>
        <begin position="458"/>
        <end position="462"/>
    </location>
</feature>
<feature type="helix" evidence="8">
    <location>
        <begin position="466"/>
        <end position="482"/>
    </location>
</feature>
<feature type="helix" evidence="8">
    <location>
        <begin position="486"/>
        <end position="501"/>
    </location>
</feature>
<feature type="helix" evidence="8">
    <location>
        <begin position="502"/>
        <end position="504"/>
    </location>
</feature>
<feature type="helix" evidence="8">
    <location>
        <begin position="513"/>
        <end position="536"/>
    </location>
</feature>
<feature type="strand" evidence="8">
    <location>
        <begin position="540"/>
        <end position="543"/>
    </location>
</feature>
<feature type="strand" evidence="8">
    <location>
        <begin position="545"/>
        <end position="552"/>
    </location>
</feature>
<feature type="helix" evidence="8">
    <location>
        <begin position="559"/>
        <end position="582"/>
    </location>
</feature>
<feature type="turn" evidence="8">
    <location>
        <begin position="583"/>
        <end position="585"/>
    </location>
</feature>
<feature type="strand" evidence="8">
    <location>
        <begin position="592"/>
        <end position="603"/>
    </location>
</feature>
<feature type="strand" evidence="8">
    <location>
        <begin position="609"/>
        <end position="612"/>
    </location>
</feature>
<feature type="strand" evidence="8">
    <location>
        <begin position="617"/>
        <end position="623"/>
    </location>
</feature>
<feature type="strand" evidence="8">
    <location>
        <begin position="626"/>
        <end position="634"/>
    </location>
</feature>
<feature type="helix" evidence="8">
    <location>
        <begin position="635"/>
        <end position="637"/>
    </location>
</feature>
<feature type="helix" evidence="8">
    <location>
        <begin position="643"/>
        <end position="657"/>
    </location>
</feature>
<feature type="helix" evidence="8">
    <location>
        <begin position="663"/>
        <end position="674"/>
    </location>
</feature>
<feature type="turn" evidence="7">
    <location>
        <begin position="675"/>
        <end position="678"/>
    </location>
</feature>
<feature type="helix" evidence="8">
    <location>
        <begin position="679"/>
        <end position="681"/>
    </location>
</feature>
<feature type="strand" evidence="8">
    <location>
        <begin position="684"/>
        <end position="688"/>
    </location>
</feature>
<feature type="helix" evidence="8">
    <location>
        <begin position="692"/>
        <end position="694"/>
    </location>
</feature>
<feature type="helix" evidence="8">
    <location>
        <begin position="701"/>
        <end position="715"/>
    </location>
</feature>
<feature type="strand" evidence="8">
    <location>
        <begin position="725"/>
        <end position="733"/>
    </location>
</feature>
<feature type="strand" evidence="8">
    <location>
        <begin position="736"/>
        <end position="739"/>
    </location>
</feature>
<feature type="helix" evidence="8">
    <location>
        <begin position="740"/>
        <end position="742"/>
    </location>
</feature>
<feature type="helix" evidence="8">
    <location>
        <begin position="749"/>
        <end position="755"/>
    </location>
</feature>
<feature type="helix" evidence="8">
    <location>
        <begin position="757"/>
        <end position="762"/>
    </location>
</feature>
<feature type="helix" evidence="8">
    <location>
        <begin position="765"/>
        <end position="768"/>
    </location>
</feature>
<feature type="helix" evidence="8">
    <location>
        <begin position="772"/>
        <end position="779"/>
    </location>
</feature>
<protein>
    <recommendedName>
        <fullName>DNA polymerase II</fullName>
        <shortName>Pol II</shortName>
        <ecNumber>2.7.7.7</ecNumber>
    </recommendedName>
</protein>